<reference key="1">
    <citation type="journal article" date="2004" name="Proc. Natl. Acad. Sci. U.S.A.">
        <title>Insights into the evolution of Yersinia pestis through whole-genome comparison with Yersinia pseudotuberculosis.</title>
        <authorList>
            <person name="Chain P.S.G."/>
            <person name="Carniel E."/>
            <person name="Larimer F.W."/>
            <person name="Lamerdin J."/>
            <person name="Stoutland P.O."/>
            <person name="Regala W.M."/>
            <person name="Georgescu A.M."/>
            <person name="Vergez L.M."/>
            <person name="Land M.L."/>
            <person name="Motin V.L."/>
            <person name="Brubaker R.R."/>
            <person name="Fowler J."/>
            <person name="Hinnebusch J."/>
            <person name="Marceau M."/>
            <person name="Medigue C."/>
            <person name="Simonet M."/>
            <person name="Chenal-Francisque V."/>
            <person name="Souza B."/>
            <person name="Dacheux D."/>
            <person name="Elliott J.M."/>
            <person name="Derbise A."/>
            <person name="Hauser L.J."/>
            <person name="Garcia E."/>
        </authorList>
    </citation>
    <scope>NUCLEOTIDE SEQUENCE [LARGE SCALE GENOMIC DNA]</scope>
    <source>
        <strain>IP32953</strain>
    </source>
</reference>
<reference key="2">
    <citation type="journal article" date="1989" name="Nucleic Acids Res.">
        <title>High degree of conservation between ribosomal proteins of Yersinia pseudotuberculosis and Escherichia coli.</title>
        <authorList>
            <person name="Gross U."/>
            <person name="Chen J.H."/>
            <person name="Kono D.H."/>
            <person name="Lobo J.G."/>
            <person name="Yu D.T.Y."/>
        </authorList>
    </citation>
    <scope>NUCLEOTIDE SEQUENCE [GENOMIC DNA] OF 81-209</scope>
</reference>
<comment type="function">
    <text evidence="1">One of the primary rRNA binding proteins, it binds directly near the 3'-end of the 23S rRNA, where it nucleates assembly of the 50S subunit.</text>
</comment>
<comment type="subunit">
    <text evidence="1">Part of the 50S ribosomal subunit. Forms a cluster with proteins L14 and L19.</text>
</comment>
<comment type="PTM">
    <text evidence="1">Methylated by PrmB.</text>
</comment>
<comment type="similarity">
    <text evidence="1">Belongs to the universal ribosomal protein uL3 family.</text>
</comment>
<feature type="chain" id="PRO_0000077197" description="Large ribosomal subunit protein uL3">
    <location>
        <begin position="1"/>
        <end position="209"/>
    </location>
</feature>
<feature type="region of interest" description="Disordered" evidence="2">
    <location>
        <begin position="133"/>
        <end position="152"/>
    </location>
</feature>
<feature type="modified residue" description="N5-methylglutamine" evidence="1">
    <location>
        <position position="150"/>
    </location>
</feature>
<name>RL3_YERPS</name>
<protein>
    <recommendedName>
        <fullName evidence="1">Large ribosomal subunit protein uL3</fullName>
    </recommendedName>
    <alternativeName>
        <fullName evidence="3">50S ribosomal protein L3</fullName>
    </alternativeName>
</protein>
<accession>P11252</accession>
<accession>Q664S1</accession>
<organism>
    <name type="scientific">Yersinia pseudotuberculosis serotype I (strain IP32953)</name>
    <dbReference type="NCBI Taxonomy" id="273123"/>
    <lineage>
        <taxon>Bacteria</taxon>
        <taxon>Pseudomonadati</taxon>
        <taxon>Pseudomonadota</taxon>
        <taxon>Gammaproteobacteria</taxon>
        <taxon>Enterobacterales</taxon>
        <taxon>Yersiniaceae</taxon>
        <taxon>Yersinia</taxon>
    </lineage>
</organism>
<sequence length="209" mass="22292">MIGLVGKKVGMTRIFTEDGVSIPVTVIEIEANRVTQVKSLENDGYRAVQVTTGAKKANRVTKPEAGHFAKAGVEAGRGLWEFRLPEGQEFTAGQEISVEIFADVKKVDVTGTSKGKGFAGTVKRWNFRTQDATHGNSLSHRVPGSIGQNQTPGKVFKGKKMAGHMGDERVTVQSLDVVRVDAERNLLLVKGAVPGATGGNLIVKPAVKA</sequence>
<evidence type="ECO:0000255" key="1">
    <source>
        <dbReference type="HAMAP-Rule" id="MF_01325"/>
    </source>
</evidence>
<evidence type="ECO:0000256" key="2">
    <source>
        <dbReference type="SAM" id="MobiDB-lite"/>
    </source>
</evidence>
<evidence type="ECO:0000305" key="3"/>
<keyword id="KW-0488">Methylation</keyword>
<keyword id="KW-0687">Ribonucleoprotein</keyword>
<keyword id="KW-0689">Ribosomal protein</keyword>
<keyword id="KW-0694">RNA-binding</keyword>
<keyword id="KW-0699">rRNA-binding</keyword>
<proteinExistence type="inferred from homology"/>
<dbReference type="EMBL" id="BX936398">
    <property type="protein sequence ID" value="CAH22936.1"/>
    <property type="molecule type" value="Genomic_DNA"/>
</dbReference>
<dbReference type="EMBL" id="X14363">
    <property type="protein sequence ID" value="CAA32542.1"/>
    <property type="molecule type" value="Genomic_DNA"/>
</dbReference>
<dbReference type="PIR" id="S04140">
    <property type="entry name" value="S04140"/>
</dbReference>
<dbReference type="RefSeq" id="WP_002218932.1">
    <property type="nucleotide sequence ID" value="NZ_CP009712.1"/>
</dbReference>
<dbReference type="SMR" id="P11252"/>
<dbReference type="GeneID" id="96663196"/>
<dbReference type="KEGG" id="ypo:BZ17_2889"/>
<dbReference type="KEGG" id="yps:YPTB3698"/>
<dbReference type="PATRIC" id="fig|273123.14.peg.3030"/>
<dbReference type="Proteomes" id="UP000001011">
    <property type="component" value="Chromosome"/>
</dbReference>
<dbReference type="GO" id="GO:0022625">
    <property type="term" value="C:cytosolic large ribosomal subunit"/>
    <property type="evidence" value="ECO:0007669"/>
    <property type="project" value="TreeGrafter"/>
</dbReference>
<dbReference type="GO" id="GO:0019843">
    <property type="term" value="F:rRNA binding"/>
    <property type="evidence" value="ECO:0007669"/>
    <property type="project" value="UniProtKB-UniRule"/>
</dbReference>
<dbReference type="GO" id="GO:0003735">
    <property type="term" value="F:structural constituent of ribosome"/>
    <property type="evidence" value="ECO:0007669"/>
    <property type="project" value="InterPro"/>
</dbReference>
<dbReference type="GO" id="GO:0006412">
    <property type="term" value="P:translation"/>
    <property type="evidence" value="ECO:0007669"/>
    <property type="project" value="UniProtKB-UniRule"/>
</dbReference>
<dbReference type="FunFam" id="2.40.30.10:FF:000004">
    <property type="entry name" value="50S ribosomal protein L3"/>
    <property type="match status" value="1"/>
</dbReference>
<dbReference type="FunFam" id="3.30.160.810:FF:000001">
    <property type="entry name" value="50S ribosomal protein L3"/>
    <property type="match status" value="1"/>
</dbReference>
<dbReference type="Gene3D" id="3.30.160.810">
    <property type="match status" value="1"/>
</dbReference>
<dbReference type="Gene3D" id="2.40.30.10">
    <property type="entry name" value="Translation factors"/>
    <property type="match status" value="1"/>
</dbReference>
<dbReference type="HAMAP" id="MF_01325_B">
    <property type="entry name" value="Ribosomal_uL3_B"/>
    <property type="match status" value="1"/>
</dbReference>
<dbReference type="InterPro" id="IPR000597">
    <property type="entry name" value="Ribosomal_uL3"/>
</dbReference>
<dbReference type="InterPro" id="IPR019927">
    <property type="entry name" value="Ribosomal_uL3_bac/org-type"/>
</dbReference>
<dbReference type="InterPro" id="IPR019926">
    <property type="entry name" value="Ribosomal_uL3_CS"/>
</dbReference>
<dbReference type="InterPro" id="IPR009000">
    <property type="entry name" value="Transl_B-barrel_sf"/>
</dbReference>
<dbReference type="NCBIfam" id="TIGR03625">
    <property type="entry name" value="L3_bact"/>
    <property type="match status" value="1"/>
</dbReference>
<dbReference type="PANTHER" id="PTHR11229">
    <property type="entry name" value="50S RIBOSOMAL PROTEIN L3"/>
    <property type="match status" value="1"/>
</dbReference>
<dbReference type="PANTHER" id="PTHR11229:SF16">
    <property type="entry name" value="LARGE RIBOSOMAL SUBUNIT PROTEIN UL3C"/>
    <property type="match status" value="1"/>
</dbReference>
<dbReference type="Pfam" id="PF00297">
    <property type="entry name" value="Ribosomal_L3"/>
    <property type="match status" value="1"/>
</dbReference>
<dbReference type="SUPFAM" id="SSF50447">
    <property type="entry name" value="Translation proteins"/>
    <property type="match status" value="1"/>
</dbReference>
<dbReference type="PROSITE" id="PS00474">
    <property type="entry name" value="RIBOSOMAL_L3"/>
    <property type="match status" value="1"/>
</dbReference>
<gene>
    <name evidence="1" type="primary">rplC</name>
    <name type="ordered locus">YPTB3698</name>
</gene>